<keyword id="KW-0235">DNA replication</keyword>
<keyword id="KW-0236">DNA replication inhibitor</keyword>
<keyword id="KW-0238">DNA-binding</keyword>
<keyword id="KW-0539">Nucleus</keyword>
<keyword id="KW-1185">Reference proteome</keyword>
<keyword id="KW-0677">Repeat</keyword>
<protein>
    <recommendedName>
        <fullName>Replication termination factor 1</fullName>
    </recommendedName>
</protein>
<organism>
    <name type="scientific">Schizosaccharomyces pombe (strain 972 / ATCC 24843)</name>
    <name type="common">Fission yeast</name>
    <dbReference type="NCBI Taxonomy" id="284812"/>
    <lineage>
        <taxon>Eukaryota</taxon>
        <taxon>Fungi</taxon>
        <taxon>Dikarya</taxon>
        <taxon>Ascomycota</taxon>
        <taxon>Taphrinomycotina</taxon>
        <taxon>Schizosaccharomycetes</taxon>
        <taxon>Schizosaccharomycetales</taxon>
        <taxon>Schizosaccharomycetaceae</taxon>
        <taxon>Schizosaccharomyces</taxon>
    </lineage>
</organism>
<proteinExistence type="evidence at protein level"/>
<comment type="function">
    <text evidence="3">Mediates site-specific replication termination at the polar replication barrier RTS1, a barrier which ensures that replication of the mat1 locus in S.pombe occurs in the centromere-proximal direction.</text>
</comment>
<comment type="subcellular location">
    <subcellularLocation>
        <location evidence="1 2">Nucleus</location>
    </subcellularLocation>
</comment>
<comment type="domain">
    <text>DNA-binding domain 1 interacts with the repeated motifs encoded by the RTS1 element as well as the elements enhancer region. DNA-binding domain 2 has only a weak DNA binding activity.</text>
</comment>
<accession>Q9UUI6</accession>
<accession>Q5NJL6</accession>
<sequence length="466" mass="55219">MQGKNNLSCRPDTEDNEELFVDDQLLSPIGDSKNTSSFIYLGNPISFHEYNYDETMVSPENVKTAIAGSAKDHETCRGFKKTGTTSYKDFVFSRDYTNWTPTFWVLLSQLIDEFLKESELNFVAARDLLIKTKRLPKPFNNLLIQFQIQVPNVSRRTVYRHLKGYFNIPGYERFQYVKKASSGSWGANDIITLEKEIAMFKKKKNWSDEQFLQYVWSDNHRDEMKTLYNCLYELIDRDKKSIYNYLRRKYNPFKKKCKWTIEDEAELKKLVEKHGTSWSLIGKLSNRLPMHCRDHWRDYIQPGEINRSPWTIQEKEKLIKTVNQYLQSNPSSPIQWSLISKNMRNRHRHHCRWKYYTLISRDIHNSSPFKLGDSIWLIERMMDLNVAEERMIDWKCLSEYANHLWTADACKSHFERIKKTLFIDGLSTFSDTLIHLHKMLNSSPEETYISNLHDSYTAFSNADDLC</sequence>
<evidence type="ECO:0000255" key="1">
    <source>
        <dbReference type="PROSITE-ProRule" id="PRU00625"/>
    </source>
</evidence>
<evidence type="ECO:0000269" key="2">
    <source>
    </source>
</evidence>
<evidence type="ECO:0000269" key="3">
    <source>
    </source>
</evidence>
<dbReference type="EMBL" id="AJ627891">
    <property type="protein sequence ID" value="CAF31329.1"/>
    <property type="molecule type" value="mRNA"/>
</dbReference>
<dbReference type="EMBL" id="CU329670">
    <property type="protein sequence ID" value="CAB52717.2"/>
    <property type="molecule type" value="Genomic_DNA"/>
</dbReference>
<dbReference type="PIR" id="T38197">
    <property type="entry name" value="T38197"/>
</dbReference>
<dbReference type="RefSeq" id="NP_594730.2">
    <property type="nucleotide sequence ID" value="NM_001020158.3"/>
</dbReference>
<dbReference type="SMR" id="Q9UUI6"/>
<dbReference type="BioGRID" id="278045">
    <property type="interactions" value="36"/>
</dbReference>
<dbReference type="FunCoup" id="Q9UUI6">
    <property type="interactions" value="271"/>
</dbReference>
<dbReference type="STRING" id="284812.Q9UUI6"/>
<dbReference type="PaxDb" id="4896-SPAC22F8.07c.1"/>
<dbReference type="EnsemblFungi" id="SPAC22F8.07c.1">
    <property type="protein sequence ID" value="SPAC22F8.07c.1:pep"/>
    <property type="gene ID" value="SPAC22F8.07c"/>
</dbReference>
<dbReference type="GeneID" id="2541545"/>
<dbReference type="KEGG" id="spo:2541545"/>
<dbReference type="PomBase" id="SPAC22F8.07c">
    <property type="gene designation" value="rtf1"/>
</dbReference>
<dbReference type="VEuPathDB" id="FungiDB:SPAC22F8.07c"/>
<dbReference type="eggNOG" id="KOG0051">
    <property type="taxonomic scope" value="Eukaryota"/>
</dbReference>
<dbReference type="HOGENOM" id="CLU_598729_0_0_1"/>
<dbReference type="InParanoid" id="Q9UUI6"/>
<dbReference type="OMA" id="HWRDYIQ"/>
<dbReference type="PhylomeDB" id="Q9UUI6"/>
<dbReference type="PRO" id="PR:Q9UUI6"/>
<dbReference type="Proteomes" id="UP000002485">
    <property type="component" value="Chromosome I"/>
</dbReference>
<dbReference type="GO" id="GO:0005634">
    <property type="term" value="C:nucleus"/>
    <property type="evidence" value="ECO:0007005"/>
    <property type="project" value="PomBase"/>
</dbReference>
<dbReference type="GO" id="GO:1990943">
    <property type="term" value="F:mating type region replication fork barrier binding"/>
    <property type="evidence" value="ECO:0000314"/>
    <property type="project" value="PomBase"/>
</dbReference>
<dbReference type="GO" id="GO:0008156">
    <property type="term" value="P:negative regulation of DNA replication"/>
    <property type="evidence" value="ECO:0007669"/>
    <property type="project" value="UniProtKB-KW"/>
</dbReference>
<dbReference type="GO" id="GO:0071171">
    <property type="term" value="P:site-specific DNA replication termination at RTS1 barrier"/>
    <property type="evidence" value="ECO:0000315"/>
    <property type="project" value="PomBase"/>
</dbReference>
<dbReference type="CDD" id="cd00167">
    <property type="entry name" value="SANT"/>
    <property type="match status" value="1"/>
</dbReference>
<dbReference type="FunFam" id="1.10.10.60:FF:000387">
    <property type="entry name" value="Replication termination factor 1"/>
    <property type="match status" value="1"/>
</dbReference>
<dbReference type="Gene3D" id="1.10.10.60">
    <property type="entry name" value="Homeodomain-like"/>
    <property type="match status" value="2"/>
</dbReference>
<dbReference type="InterPro" id="IPR051651">
    <property type="entry name" value="DMTF1_DNA-bind_reg"/>
</dbReference>
<dbReference type="InterPro" id="IPR009057">
    <property type="entry name" value="Homeodomain-like_sf"/>
</dbReference>
<dbReference type="InterPro" id="IPR017930">
    <property type="entry name" value="Myb_dom"/>
</dbReference>
<dbReference type="InterPro" id="IPR049260">
    <property type="entry name" value="REB1_MybAD"/>
</dbReference>
<dbReference type="InterPro" id="IPR001005">
    <property type="entry name" value="SANT/Myb"/>
</dbReference>
<dbReference type="PANTHER" id="PTHR46380">
    <property type="entry name" value="CYCLIN-D-BINDING MYB-LIKE TRANSCRIPTION FACTOR 1"/>
    <property type="match status" value="1"/>
</dbReference>
<dbReference type="PANTHER" id="PTHR46380:SF4">
    <property type="entry name" value="REPLICATION TERMINATION FACTOR 1"/>
    <property type="match status" value="1"/>
</dbReference>
<dbReference type="Pfam" id="PF00249">
    <property type="entry name" value="Myb_DNA-binding"/>
    <property type="match status" value="2"/>
</dbReference>
<dbReference type="Pfam" id="PF21559">
    <property type="entry name" value="Reb1_MybAD"/>
    <property type="match status" value="1"/>
</dbReference>
<dbReference type="SMART" id="SM00717">
    <property type="entry name" value="SANT"/>
    <property type="match status" value="3"/>
</dbReference>
<dbReference type="SUPFAM" id="SSF46689">
    <property type="entry name" value="Homeodomain-like"/>
    <property type="match status" value="2"/>
</dbReference>
<dbReference type="PROSITE" id="PS51294">
    <property type="entry name" value="HTH_MYB"/>
    <property type="match status" value="1"/>
</dbReference>
<dbReference type="PROSITE" id="PS50090">
    <property type="entry name" value="MYB_LIKE"/>
    <property type="match status" value="1"/>
</dbReference>
<gene>
    <name type="primary">rtf1</name>
    <name type="ORF">SPAC22F8.07c</name>
</gene>
<reference key="1">
    <citation type="journal article" date="2008" name="Genetics">
        <title>Rtf1-mediated eukaryotic site-specific replication termination.</title>
        <authorList>
            <person name="Eydmann T."/>
            <person name="Sommariva E."/>
            <person name="Inagawa T."/>
            <person name="Mian S."/>
            <person name="Klar A.J.S."/>
            <person name="Dalgaard J.Z."/>
        </authorList>
    </citation>
    <scope>NUCLEOTIDE SEQUENCE [MRNA]</scope>
    <scope>FUNCTION</scope>
    <scope>DNA-BINDING</scope>
    <scope>MUTAGENESIS OF LEU-129; PRO-136; SER-154; LEU-162; GLY-183; ARG-293; SER-340 AND MET-343</scope>
</reference>
<reference key="2">
    <citation type="journal article" date="2002" name="Nature">
        <title>The genome sequence of Schizosaccharomyces pombe.</title>
        <authorList>
            <person name="Wood V."/>
            <person name="Gwilliam R."/>
            <person name="Rajandream M.A."/>
            <person name="Lyne M.H."/>
            <person name="Lyne R."/>
            <person name="Stewart A."/>
            <person name="Sgouros J.G."/>
            <person name="Peat N."/>
            <person name="Hayles J."/>
            <person name="Baker S.G."/>
            <person name="Basham D."/>
            <person name="Bowman S."/>
            <person name="Brooks K."/>
            <person name="Brown D."/>
            <person name="Brown S."/>
            <person name="Chillingworth T."/>
            <person name="Churcher C.M."/>
            <person name="Collins M."/>
            <person name="Connor R."/>
            <person name="Cronin A."/>
            <person name="Davis P."/>
            <person name="Feltwell T."/>
            <person name="Fraser A."/>
            <person name="Gentles S."/>
            <person name="Goble A."/>
            <person name="Hamlin N."/>
            <person name="Harris D.E."/>
            <person name="Hidalgo J."/>
            <person name="Hodgson G."/>
            <person name="Holroyd S."/>
            <person name="Hornsby T."/>
            <person name="Howarth S."/>
            <person name="Huckle E.J."/>
            <person name="Hunt S."/>
            <person name="Jagels K."/>
            <person name="James K.D."/>
            <person name="Jones L."/>
            <person name="Jones M."/>
            <person name="Leather S."/>
            <person name="McDonald S."/>
            <person name="McLean J."/>
            <person name="Mooney P."/>
            <person name="Moule S."/>
            <person name="Mungall K.L."/>
            <person name="Murphy L.D."/>
            <person name="Niblett D."/>
            <person name="Odell C."/>
            <person name="Oliver K."/>
            <person name="O'Neil S."/>
            <person name="Pearson D."/>
            <person name="Quail M.A."/>
            <person name="Rabbinowitsch E."/>
            <person name="Rutherford K.M."/>
            <person name="Rutter S."/>
            <person name="Saunders D."/>
            <person name="Seeger K."/>
            <person name="Sharp S."/>
            <person name="Skelton J."/>
            <person name="Simmonds M.N."/>
            <person name="Squares R."/>
            <person name="Squares S."/>
            <person name="Stevens K."/>
            <person name="Taylor K."/>
            <person name="Taylor R.G."/>
            <person name="Tivey A."/>
            <person name="Walsh S.V."/>
            <person name="Warren T."/>
            <person name="Whitehead S."/>
            <person name="Woodward J.R."/>
            <person name="Volckaert G."/>
            <person name="Aert R."/>
            <person name="Robben J."/>
            <person name="Grymonprez B."/>
            <person name="Weltjens I."/>
            <person name="Vanstreels E."/>
            <person name="Rieger M."/>
            <person name="Schaefer M."/>
            <person name="Mueller-Auer S."/>
            <person name="Gabel C."/>
            <person name="Fuchs M."/>
            <person name="Duesterhoeft A."/>
            <person name="Fritzc C."/>
            <person name="Holzer E."/>
            <person name="Moestl D."/>
            <person name="Hilbert H."/>
            <person name="Borzym K."/>
            <person name="Langer I."/>
            <person name="Beck A."/>
            <person name="Lehrach H."/>
            <person name="Reinhardt R."/>
            <person name="Pohl T.M."/>
            <person name="Eger P."/>
            <person name="Zimmermann W."/>
            <person name="Wedler H."/>
            <person name="Wambutt R."/>
            <person name="Purnelle B."/>
            <person name="Goffeau A."/>
            <person name="Cadieu E."/>
            <person name="Dreano S."/>
            <person name="Gloux S."/>
            <person name="Lelaure V."/>
            <person name="Mottier S."/>
            <person name="Galibert F."/>
            <person name="Aves S.J."/>
            <person name="Xiang Z."/>
            <person name="Hunt C."/>
            <person name="Moore K."/>
            <person name="Hurst S.M."/>
            <person name="Lucas M."/>
            <person name="Rochet M."/>
            <person name="Gaillardin C."/>
            <person name="Tallada V.A."/>
            <person name="Garzon A."/>
            <person name="Thode G."/>
            <person name="Daga R.R."/>
            <person name="Cruzado L."/>
            <person name="Jimenez J."/>
            <person name="Sanchez M."/>
            <person name="del Rey F."/>
            <person name="Benito J."/>
            <person name="Dominguez A."/>
            <person name="Revuelta J.L."/>
            <person name="Moreno S."/>
            <person name="Armstrong J."/>
            <person name="Forsburg S.L."/>
            <person name="Cerutti L."/>
            <person name="Lowe T."/>
            <person name="McCombie W.R."/>
            <person name="Paulsen I."/>
            <person name="Potashkin J."/>
            <person name="Shpakovski G.V."/>
            <person name="Ussery D."/>
            <person name="Barrell B.G."/>
            <person name="Nurse P."/>
        </authorList>
    </citation>
    <scope>NUCLEOTIDE SEQUENCE [LARGE SCALE GENOMIC DNA]</scope>
    <source>
        <strain>972 / ATCC 24843</strain>
    </source>
</reference>
<reference key="3">
    <citation type="journal article" date="2006" name="Nat. Biotechnol.">
        <title>ORFeome cloning and global analysis of protein localization in the fission yeast Schizosaccharomyces pombe.</title>
        <authorList>
            <person name="Matsuyama A."/>
            <person name="Arai R."/>
            <person name="Yashiroda Y."/>
            <person name="Shirai A."/>
            <person name="Kamata A."/>
            <person name="Sekido S."/>
            <person name="Kobayashi Y."/>
            <person name="Hashimoto A."/>
            <person name="Hamamoto M."/>
            <person name="Hiraoka Y."/>
            <person name="Horinouchi S."/>
            <person name="Yoshida M."/>
        </authorList>
    </citation>
    <scope>SUBCELLULAR LOCATION [LARGE SCALE ANALYSIS]</scope>
</reference>
<name>RTF_SCHPO</name>
<feature type="chain" id="PRO_0000372310" description="Replication termination factor 1">
    <location>
        <begin position="1"/>
        <end position="466"/>
    </location>
</feature>
<feature type="domain" description="HTH myb-type 1" evidence="1">
    <location>
        <begin position="251"/>
        <end position="304"/>
    </location>
</feature>
<feature type="domain" description="HTH myb-type 2" evidence="1">
    <location>
        <begin position="305"/>
        <end position="363"/>
    </location>
</feature>
<feature type="DNA-binding region" description="H-T-H motif" evidence="1">
    <location>
        <begin position="278"/>
        <end position="300"/>
    </location>
</feature>
<feature type="DNA-binding region" description="H-T-H motif" evidence="1">
    <location>
        <begin position="336"/>
        <end position="359"/>
    </location>
</feature>
<feature type="region of interest" description="DNA-binding domain 1">
    <location>
        <begin position="94"/>
        <end position="249"/>
    </location>
</feature>
<feature type="region of interest" description="DNA-binding domain 2">
    <location>
        <begin position="250"/>
        <end position="421"/>
    </location>
</feature>
<feature type="mutagenesis site" description="Abolishes barrier activity." evidence="3">
    <original>L</original>
    <variation>F</variation>
    <location>
        <position position="129"/>
    </location>
</feature>
<feature type="mutagenesis site" description="Abolishes wild-type barrier activity and induces a faint new barrier signal of inversed polarity." evidence="3">
    <original>P</original>
    <variation>L</variation>
    <location>
        <position position="136"/>
    </location>
</feature>
<feature type="mutagenesis site" description="Abolishes wild-type barrier activity and induces a new barrier signal of inversed polarity." evidence="3">
    <original>S</original>
    <variation>L</variation>
    <location>
        <position position="154"/>
    </location>
</feature>
<feature type="mutagenesis site" description="Abolishes wild-type barrier activity and partially induces a new barrier signal of inversed polarity." evidence="3">
    <original>L</original>
    <variation>Y</variation>
    <location>
        <position position="162"/>
    </location>
</feature>
<feature type="mutagenesis site" description="Abolishes barrier activity." evidence="3">
    <original>G</original>
    <variation>E</variation>
    <location>
        <position position="183"/>
    </location>
</feature>
<feature type="mutagenesis site" description="Strongly reduces barrier activity." evidence="3">
    <original>R</original>
    <variation>K</variation>
    <location>
        <position position="293"/>
    </location>
</feature>
<feature type="mutagenesis site" description="Strongly reduces barrier activity." evidence="3">
    <original>S</original>
    <variation>F</variation>
    <location>
        <position position="340"/>
    </location>
</feature>
<feature type="mutagenesis site" description="Strongly reduces barrier activity." evidence="3">
    <original>M</original>
    <variation>R</variation>
    <location>
        <position position="343"/>
    </location>
</feature>